<feature type="chain" id="PRO_0000440636" description="Cyclic di-GMP phosphodiesterase PA4108">
    <location>
        <begin position="1"/>
        <end position="414"/>
    </location>
</feature>
<feature type="domain" description="HD-GYP" evidence="2">
    <location>
        <begin position="133"/>
        <end position="330"/>
    </location>
</feature>
<feature type="binding site" evidence="1">
    <location>
        <position position="160"/>
    </location>
    <ligand>
        <name>a divalent metal cation</name>
        <dbReference type="ChEBI" id="CHEBI:60240"/>
        <label>1</label>
    </ligand>
</feature>
<feature type="binding site" evidence="1">
    <location>
        <position position="192"/>
    </location>
    <ligand>
        <name>a divalent metal cation</name>
        <dbReference type="ChEBI" id="CHEBI:60240"/>
        <label>1</label>
    </ligand>
</feature>
<feature type="binding site" evidence="1">
    <location>
        <position position="193"/>
    </location>
    <ligand>
        <name>a divalent metal cation</name>
        <dbReference type="ChEBI" id="CHEBI:60240"/>
        <label>1</label>
    </ligand>
</feature>
<feature type="binding site" evidence="1">
    <location>
        <position position="193"/>
    </location>
    <ligand>
        <name>a divalent metal cation</name>
        <dbReference type="ChEBI" id="CHEBI:60240"/>
        <label>2</label>
    </ligand>
</feature>
<feature type="binding site" evidence="1">
    <location>
        <position position="221"/>
    </location>
    <ligand>
        <name>a divalent metal cation</name>
        <dbReference type="ChEBI" id="CHEBI:60240"/>
        <label>2</label>
    </ligand>
</feature>
<feature type="binding site" evidence="1">
    <location>
        <position position="246"/>
    </location>
    <ligand>
        <name>a divalent metal cation</name>
        <dbReference type="ChEBI" id="CHEBI:60240"/>
        <label>2</label>
    </ligand>
</feature>
<feature type="binding site" evidence="1">
    <location>
        <position position="247"/>
    </location>
    <ligand>
        <name>a divalent metal cation</name>
        <dbReference type="ChEBI" id="CHEBI:60240"/>
        <label>2</label>
    </ligand>
</feature>
<dbReference type="EC" id="3.1.4.-" evidence="4"/>
<dbReference type="EMBL" id="AE004091">
    <property type="protein sequence ID" value="AAG07495.1"/>
    <property type="molecule type" value="Genomic_DNA"/>
</dbReference>
<dbReference type="PIR" id="D83132">
    <property type="entry name" value="D83132"/>
</dbReference>
<dbReference type="RefSeq" id="NP_252797.1">
    <property type="nucleotide sequence ID" value="NC_002516.2"/>
</dbReference>
<dbReference type="RefSeq" id="WP_003113015.1">
    <property type="nucleotide sequence ID" value="NZ_QZGE01000013.1"/>
</dbReference>
<dbReference type="SMR" id="Q9HWS0"/>
<dbReference type="STRING" id="208964.PA4108"/>
<dbReference type="PaxDb" id="208964-PA4108"/>
<dbReference type="GeneID" id="877982"/>
<dbReference type="KEGG" id="pae:PA4108"/>
<dbReference type="PATRIC" id="fig|208964.12.peg.4304"/>
<dbReference type="PseudoCAP" id="PA4108"/>
<dbReference type="HOGENOM" id="CLU_000445_92_1_6"/>
<dbReference type="InParanoid" id="Q9HWS0"/>
<dbReference type="OrthoDB" id="9764808at2"/>
<dbReference type="PhylomeDB" id="Q9HWS0"/>
<dbReference type="BioCyc" id="PAER208964:G1FZ6-4180-MONOMER"/>
<dbReference type="BRENDA" id="3.1.4.52">
    <property type="organism ID" value="5087"/>
</dbReference>
<dbReference type="Proteomes" id="UP000002438">
    <property type="component" value="Chromosome"/>
</dbReference>
<dbReference type="GO" id="GO:0071111">
    <property type="term" value="F:cyclic-guanylate-specific phosphodiesterase activity"/>
    <property type="evidence" value="ECO:0000314"/>
    <property type="project" value="PseudoCAP"/>
</dbReference>
<dbReference type="GO" id="GO:0046872">
    <property type="term" value="F:metal ion binding"/>
    <property type="evidence" value="ECO:0007669"/>
    <property type="project" value="UniProtKB-KW"/>
</dbReference>
<dbReference type="GO" id="GO:2000147">
    <property type="term" value="P:positive regulation of cell motility"/>
    <property type="evidence" value="ECO:0000315"/>
    <property type="project" value="PseudoCAP"/>
</dbReference>
<dbReference type="GO" id="GO:1900231">
    <property type="term" value="P:regulation of single-species biofilm formation on inanimate substrate"/>
    <property type="evidence" value="ECO:0000315"/>
    <property type="project" value="PseudoCAP"/>
</dbReference>
<dbReference type="CDD" id="cd00077">
    <property type="entry name" value="HDc"/>
    <property type="match status" value="1"/>
</dbReference>
<dbReference type="Gene3D" id="1.10.3210.10">
    <property type="entry name" value="Hypothetical protein af1432"/>
    <property type="match status" value="1"/>
</dbReference>
<dbReference type="InterPro" id="IPR021812">
    <property type="entry name" value="DUF3391"/>
</dbReference>
<dbReference type="InterPro" id="IPR003607">
    <property type="entry name" value="HD/PDEase_dom"/>
</dbReference>
<dbReference type="InterPro" id="IPR037522">
    <property type="entry name" value="HD_GYP_dom"/>
</dbReference>
<dbReference type="InterPro" id="IPR006675">
    <property type="entry name" value="HDIG_dom"/>
</dbReference>
<dbReference type="NCBIfam" id="TIGR00277">
    <property type="entry name" value="HDIG"/>
    <property type="match status" value="1"/>
</dbReference>
<dbReference type="PANTHER" id="PTHR43155:SF2">
    <property type="entry name" value="CYCLIC DI-GMP PHOSPHODIESTERASE PA4108"/>
    <property type="match status" value="1"/>
</dbReference>
<dbReference type="PANTHER" id="PTHR43155">
    <property type="entry name" value="CYCLIC DI-GMP PHOSPHODIESTERASE PA4108-RELATED"/>
    <property type="match status" value="1"/>
</dbReference>
<dbReference type="Pfam" id="PF11871">
    <property type="entry name" value="DUF3391"/>
    <property type="match status" value="1"/>
</dbReference>
<dbReference type="Pfam" id="PF13487">
    <property type="entry name" value="HD_5"/>
    <property type="match status" value="1"/>
</dbReference>
<dbReference type="SMART" id="SM00471">
    <property type="entry name" value="HDc"/>
    <property type="match status" value="1"/>
</dbReference>
<dbReference type="SUPFAM" id="SSF109604">
    <property type="entry name" value="HD-domain/PDEase-like"/>
    <property type="match status" value="1"/>
</dbReference>
<dbReference type="PROSITE" id="PS51832">
    <property type="entry name" value="HD_GYP"/>
    <property type="match status" value="1"/>
</dbReference>
<evidence type="ECO:0000250" key="1">
    <source>
        <dbReference type="UniProtKB" id="Q9HV27"/>
    </source>
</evidence>
<evidence type="ECO:0000255" key="2">
    <source>
        <dbReference type="PROSITE-ProRule" id="PRU01176"/>
    </source>
</evidence>
<evidence type="ECO:0000269" key="3">
    <source>
    </source>
</evidence>
<evidence type="ECO:0000269" key="4">
    <source>
    </source>
</evidence>
<evidence type="ECO:0000303" key="5">
    <source>
    </source>
</evidence>
<evidence type="ECO:0000312" key="6">
    <source>
        <dbReference type="EMBL" id="AAG07495.1"/>
    </source>
</evidence>
<gene>
    <name evidence="6" type="ordered locus">PA4108</name>
</gene>
<name>CDPD1_PSEAE</name>
<organism>
    <name type="scientific">Pseudomonas aeruginosa (strain ATCC 15692 / DSM 22644 / CIP 104116 / JCM 14847 / LMG 12228 / 1C / PRS 101 / PAO1)</name>
    <dbReference type="NCBI Taxonomy" id="208964"/>
    <lineage>
        <taxon>Bacteria</taxon>
        <taxon>Pseudomonadati</taxon>
        <taxon>Pseudomonadota</taxon>
        <taxon>Gammaproteobacteria</taxon>
        <taxon>Pseudomonadales</taxon>
        <taxon>Pseudomonadaceae</taxon>
        <taxon>Pseudomonas</taxon>
    </lineage>
</organism>
<keyword id="KW-0973">c-di-GMP</keyword>
<keyword id="KW-0378">Hydrolase</keyword>
<keyword id="KW-0479">Metal-binding</keyword>
<keyword id="KW-1185">Reference proteome</keyword>
<protein>
    <recommendedName>
        <fullName evidence="5">Cyclic di-GMP phosphodiesterase PA4108</fullName>
        <ecNumber evidence="4">3.1.4.-</ecNumber>
    </recommendedName>
</protein>
<proteinExistence type="evidence at protein level"/>
<sequence length="414" mass="45419">MLKRIPVTQLRLGMFVQSLCGSWLDHPFWKRGGFLLDSQADLQRLRESAVKEVWIDASKGLDLPEEAAVSAAAVLPVTMPAGPSPARVALEEEIRHAALLCSRAKAAVVSMFRDARMGQAIDTAHASDLVDEISASVLRHPNALLSLVRLKTSDEYTYMHSVAVCALMIALARQLELPDPLVREAGLAGLLHDIGKMAVPDPILNKPGKLTDPEFGLVRRHPQNGARMLLDCRQVSALVVDVCLHHHERIDGTGYPFGLAQEQISLLARMGAVCDVYDAITSDRPYKKGWNAAEAIRRMAEWNGHFDPQVFRAFVKAVGIYPVGALVRLESGRLGVVLEQHGRSLLTPRVKVFFSARSKVPIPQQVVDLGRAGQTDRIVGFEPAEAWNFRNLDEMWTGLAKSTGSYFDAGTGNP</sequence>
<comment type="function">
    <text evidence="3 4">Phosphodiesterase (PDE) that catalyzes the hydrolysis of cyclic diguanylate (c-di-GMP) to GMP (PubMed:19170727, PubMed:24066157). Hydrolyzes c-di-GMP to GMP in a two-step reaction, via the linear intermediate 5'-phosphoguanylyl(3'-&gt;5')guanosine (pGpG). In vitro, can use pGpG as an alternative substrate and hydrolyze it into GMP (PubMed:24066157). Acts in regulation of motility, synthesis of virulence determinants and biofilm architecture (PubMed:19170727).</text>
</comment>
<comment type="catalytic activity">
    <reaction evidence="4">
        <text>3',3'-c-di-GMP + 2 H2O = 2 GMP + 2 H(+)</text>
        <dbReference type="Rhea" id="RHEA:52928"/>
        <dbReference type="ChEBI" id="CHEBI:15377"/>
        <dbReference type="ChEBI" id="CHEBI:15378"/>
        <dbReference type="ChEBI" id="CHEBI:58115"/>
        <dbReference type="ChEBI" id="CHEBI:58805"/>
    </reaction>
</comment>
<comment type="activity regulation">
    <text evidence="4">Activated by Mg(2+) and Mn(2+).</text>
</comment>
<comment type="biophysicochemical properties">
    <kinetics>
        <KM evidence="4">20 uM for c-di-GMP</KM>
        <KM evidence="4">30 uM for pGpG</KM>
        <text evidence="4">kcat is 0.00015 sec(-1).</text>
    </kinetics>
    <phDependence>
        <text evidence="4">Optimum pH is 8.</text>
    </phDependence>
    <temperatureDependence>
        <text evidence="4">Optimum temperature is 30 degrees Celsius.</text>
    </temperatureDependence>
</comment>
<comment type="subunit">
    <text evidence="4">Monomer.</text>
</comment>
<comment type="disruption phenotype">
    <text evidence="3">Disruption mutant has increased levels of cyclic di-GMP. Mutation leads to reduction in both swarming and twitching motility, to a decrease in pyocyanine production, to a reduction in the extracellular levels of the ExoS effector, and a reduction in virulence. It produces a flatter biofilm.</text>
</comment>
<reference key="1">
    <citation type="journal article" date="2000" name="Nature">
        <title>Complete genome sequence of Pseudomonas aeruginosa PAO1, an opportunistic pathogen.</title>
        <authorList>
            <person name="Stover C.K."/>
            <person name="Pham X.-Q.T."/>
            <person name="Erwin A.L."/>
            <person name="Mizoguchi S.D."/>
            <person name="Warrener P."/>
            <person name="Hickey M.J."/>
            <person name="Brinkman F.S.L."/>
            <person name="Hufnagle W.O."/>
            <person name="Kowalik D.J."/>
            <person name="Lagrou M."/>
            <person name="Garber R.L."/>
            <person name="Goltry L."/>
            <person name="Tolentino E."/>
            <person name="Westbrock-Wadman S."/>
            <person name="Yuan Y."/>
            <person name="Brody L.L."/>
            <person name="Coulter S.N."/>
            <person name="Folger K.R."/>
            <person name="Kas A."/>
            <person name="Larbig K."/>
            <person name="Lim R.M."/>
            <person name="Smith K.A."/>
            <person name="Spencer D.H."/>
            <person name="Wong G.K.-S."/>
            <person name="Wu Z."/>
            <person name="Paulsen I.T."/>
            <person name="Reizer J."/>
            <person name="Saier M.H. Jr."/>
            <person name="Hancock R.E.W."/>
            <person name="Lory S."/>
            <person name="Olson M.V."/>
        </authorList>
    </citation>
    <scope>NUCLEOTIDE SEQUENCE [LARGE SCALE GENOMIC DNA]</scope>
    <source>
        <strain>ATCC 15692 / DSM 22644 / CIP 104116 / JCM 14847 / LMG 12228 / 1C / PRS 101 / PAO1</strain>
    </source>
</reference>
<reference key="2">
    <citation type="journal article" date="2009" name="Environ. Microbiol.">
        <title>HD-GYP domain proteins regulate biofilm formation and virulence in Pseudomonas aeruginosa.</title>
        <authorList>
            <person name="Ryan R.P."/>
            <person name="Lucey J."/>
            <person name="O'Donovan K."/>
            <person name="McCarthy Y."/>
            <person name="Yang L."/>
            <person name="Tolker-Nielsen T."/>
            <person name="Dow J.M."/>
        </authorList>
    </citation>
    <scope>FUNCTION</scope>
    <scope>DISRUPTION PHENOTYPE</scope>
    <source>
        <strain>ATCC 15692 / DSM 22644 / CIP 104116 / JCM 14847 / LMG 12228 / 1C / PRS 101 / PAO1</strain>
    </source>
</reference>
<reference key="3">
    <citation type="journal article" date="2013" name="PLoS ONE">
        <title>C-di-GMP hydrolysis by Pseudomonas aeruginosa HD-GYP phosphodiesterases: analysis of the reaction mechanism and novel roles for pGpG.</title>
        <authorList>
            <person name="Stelitano V."/>
            <person name="Giardina G."/>
            <person name="Paiardini A."/>
            <person name="Castiglione N."/>
            <person name="Cutruzzola F."/>
            <person name="Rinaldo S."/>
        </authorList>
    </citation>
    <scope>FUNCTION</scope>
    <scope>CATALYTIC ACTIVITY</scope>
    <scope>ACTIVITY REGULATION</scope>
    <scope>BIOPHYSICOCHEMICAL PROPERTIES</scope>
    <scope>SUBUNIT</scope>
</reference>
<accession>Q9HWS0</accession>